<keyword id="KW-0963">Cytoplasm</keyword>
<keyword id="KW-0238">DNA-binding</keyword>
<keyword id="KW-1185">Reference proteome</keyword>
<organism>
    <name type="scientific">Shewanella oneidensis (strain ATCC 700550 / JCM 31522 / CIP 106686 / LMG 19005 / NCIMB 14063 / MR-1)</name>
    <dbReference type="NCBI Taxonomy" id="211586"/>
    <lineage>
        <taxon>Bacteria</taxon>
        <taxon>Pseudomonadati</taxon>
        <taxon>Pseudomonadota</taxon>
        <taxon>Gammaproteobacteria</taxon>
        <taxon>Alteromonadales</taxon>
        <taxon>Shewanellaceae</taxon>
        <taxon>Shewanella</taxon>
    </lineage>
</organism>
<dbReference type="EMBL" id="AE014299">
    <property type="protein sequence ID" value="AAN55064.1"/>
    <property type="molecule type" value="Genomic_DNA"/>
</dbReference>
<dbReference type="RefSeq" id="NP_717620.1">
    <property type="nucleotide sequence ID" value="NC_004347.2"/>
</dbReference>
<dbReference type="RefSeq" id="WP_011072098.1">
    <property type="nucleotide sequence ID" value="NC_004347.2"/>
</dbReference>
<dbReference type="SMR" id="Q8EFF9"/>
<dbReference type="STRING" id="211586.SO_2014"/>
<dbReference type="PaxDb" id="211586-SO_2014"/>
<dbReference type="KEGG" id="son:SO_2014"/>
<dbReference type="PATRIC" id="fig|211586.12.peg.1933"/>
<dbReference type="eggNOG" id="COG0718">
    <property type="taxonomic scope" value="Bacteria"/>
</dbReference>
<dbReference type="HOGENOM" id="CLU_140930_0_0_6"/>
<dbReference type="OrthoDB" id="9808738at2"/>
<dbReference type="PhylomeDB" id="Q8EFF9"/>
<dbReference type="BioCyc" id="SONE211586:G1GMP-1856-MONOMER"/>
<dbReference type="Proteomes" id="UP000008186">
    <property type="component" value="Chromosome"/>
</dbReference>
<dbReference type="GO" id="GO:0043590">
    <property type="term" value="C:bacterial nucleoid"/>
    <property type="evidence" value="ECO:0007669"/>
    <property type="project" value="UniProtKB-UniRule"/>
</dbReference>
<dbReference type="GO" id="GO:0005829">
    <property type="term" value="C:cytosol"/>
    <property type="evidence" value="ECO:0000318"/>
    <property type="project" value="GO_Central"/>
</dbReference>
<dbReference type="GO" id="GO:0003677">
    <property type="term" value="F:DNA binding"/>
    <property type="evidence" value="ECO:0000318"/>
    <property type="project" value="GO_Central"/>
</dbReference>
<dbReference type="FunFam" id="3.30.1310.10:FF:000001">
    <property type="entry name" value="Nucleoid-associated protein YbaB"/>
    <property type="match status" value="1"/>
</dbReference>
<dbReference type="Gene3D" id="3.30.1310.10">
    <property type="entry name" value="Nucleoid-associated protein YbaB-like domain"/>
    <property type="match status" value="1"/>
</dbReference>
<dbReference type="HAMAP" id="MF_00274">
    <property type="entry name" value="DNA_YbaB_EbfC"/>
    <property type="match status" value="1"/>
</dbReference>
<dbReference type="InterPro" id="IPR036894">
    <property type="entry name" value="YbaB-like_sf"/>
</dbReference>
<dbReference type="InterPro" id="IPR004401">
    <property type="entry name" value="YbaB/EbfC"/>
</dbReference>
<dbReference type="NCBIfam" id="TIGR00103">
    <property type="entry name" value="DNA_YbaB_EbfC"/>
    <property type="match status" value="1"/>
</dbReference>
<dbReference type="PANTHER" id="PTHR33449">
    <property type="entry name" value="NUCLEOID-ASSOCIATED PROTEIN YBAB"/>
    <property type="match status" value="1"/>
</dbReference>
<dbReference type="PANTHER" id="PTHR33449:SF1">
    <property type="entry name" value="NUCLEOID-ASSOCIATED PROTEIN YBAB"/>
    <property type="match status" value="1"/>
</dbReference>
<dbReference type="Pfam" id="PF02575">
    <property type="entry name" value="YbaB_DNA_bd"/>
    <property type="match status" value="1"/>
</dbReference>
<dbReference type="PIRSF" id="PIRSF004555">
    <property type="entry name" value="UCP004555"/>
    <property type="match status" value="1"/>
</dbReference>
<dbReference type="SUPFAM" id="SSF82607">
    <property type="entry name" value="YbaB-like"/>
    <property type="match status" value="1"/>
</dbReference>
<comment type="function">
    <text evidence="1">Binds to DNA and alters its conformation. May be involved in regulation of gene expression, nucleoid organization and DNA protection.</text>
</comment>
<comment type="subunit">
    <text evidence="1">Homodimer.</text>
</comment>
<comment type="subcellular location">
    <subcellularLocation>
        <location evidence="1">Cytoplasm</location>
        <location evidence="1">Nucleoid</location>
    </subcellularLocation>
</comment>
<comment type="similarity">
    <text evidence="1">Belongs to the YbaB/EbfC family.</text>
</comment>
<proteinExistence type="inferred from homology"/>
<accession>Q8EFF9</accession>
<reference key="1">
    <citation type="journal article" date="2002" name="Nat. Biotechnol.">
        <title>Genome sequence of the dissimilatory metal ion-reducing bacterium Shewanella oneidensis.</title>
        <authorList>
            <person name="Heidelberg J.F."/>
            <person name="Paulsen I.T."/>
            <person name="Nelson K.E."/>
            <person name="Gaidos E.J."/>
            <person name="Nelson W.C."/>
            <person name="Read T.D."/>
            <person name="Eisen J.A."/>
            <person name="Seshadri R."/>
            <person name="Ward N.L."/>
            <person name="Methe B.A."/>
            <person name="Clayton R.A."/>
            <person name="Meyer T."/>
            <person name="Tsapin A."/>
            <person name="Scott J."/>
            <person name="Beanan M.J."/>
            <person name="Brinkac L.M."/>
            <person name="Daugherty S.C."/>
            <person name="DeBoy R.T."/>
            <person name="Dodson R.J."/>
            <person name="Durkin A.S."/>
            <person name="Haft D.H."/>
            <person name="Kolonay J.F."/>
            <person name="Madupu R."/>
            <person name="Peterson J.D."/>
            <person name="Umayam L.A."/>
            <person name="White O."/>
            <person name="Wolf A.M."/>
            <person name="Vamathevan J.J."/>
            <person name="Weidman J.F."/>
            <person name="Impraim M."/>
            <person name="Lee K."/>
            <person name="Berry K.J."/>
            <person name="Lee C."/>
            <person name="Mueller J."/>
            <person name="Khouri H.M."/>
            <person name="Gill J."/>
            <person name="Utterback T.R."/>
            <person name="McDonald L.A."/>
            <person name="Feldblyum T.V."/>
            <person name="Smith H.O."/>
            <person name="Venter J.C."/>
            <person name="Nealson K.H."/>
            <person name="Fraser C.M."/>
        </authorList>
    </citation>
    <scope>NUCLEOTIDE SEQUENCE [LARGE SCALE GENOMIC DNA]</scope>
    <source>
        <strain>ATCC 700550 / JCM 31522 / CIP 106686 / LMG 19005 / NCIMB 14063 / MR-1</strain>
    </source>
</reference>
<name>Y2014_SHEON</name>
<gene>
    <name type="ordered locus">SO_2014</name>
</gene>
<sequence>MFGKGGMGNLMKQAQMMQERMAKMQEEIARMEMVGESGAGLVKVTMTGAHTVRKVEIYPSLMEDDKEMLEDLIAAACNDAARIIEENQKAKMAEVTGGMQLPPGMKMPF</sequence>
<evidence type="ECO:0000255" key="1">
    <source>
        <dbReference type="HAMAP-Rule" id="MF_00274"/>
    </source>
</evidence>
<feature type="chain" id="PRO_0000170434" description="Nucleoid-associated protein SO_2014">
    <location>
        <begin position="1"/>
        <end position="109"/>
    </location>
</feature>
<protein>
    <recommendedName>
        <fullName evidence="1">Nucleoid-associated protein SO_2014</fullName>
    </recommendedName>
</protein>